<keyword id="KW-0472">Membrane</keyword>
<keyword id="KW-0479">Metal-binding</keyword>
<keyword id="KW-0611">Plant defense</keyword>
<keyword id="KW-1185">Reference proteome</keyword>
<keyword id="KW-0808">Transferase</keyword>
<keyword id="KW-0812">Transmembrane</keyword>
<keyword id="KW-1133">Transmembrane helix</keyword>
<keyword id="KW-0833">Ubl conjugation pathway</keyword>
<keyword id="KW-0862">Zinc</keyword>
<keyword id="KW-0863">Zinc-finger</keyword>
<protein>
    <recommendedName>
        <fullName>RING-H2 finger protein ATL17</fullName>
        <ecNumber evidence="6">2.3.2.27</ecNumber>
    </recommendedName>
    <alternativeName>
        <fullName evidence="6">RING-type E3 ubiquitin transferase ATL17</fullName>
    </alternativeName>
</protein>
<reference key="1">
    <citation type="journal article" date="1998" name="Nature">
        <title>Analysis of 1.9 Mb of contiguous sequence from chromosome 4 of Arabidopsis thaliana.</title>
        <authorList>
            <person name="Bevan M."/>
            <person name="Bancroft I."/>
            <person name="Bent E."/>
            <person name="Love K."/>
            <person name="Goodman H.M."/>
            <person name="Dean C."/>
            <person name="Bergkamp R."/>
            <person name="Dirkse W."/>
            <person name="van Staveren M."/>
            <person name="Stiekema W."/>
            <person name="Drost L."/>
            <person name="Ridley P."/>
            <person name="Hudson S.-A."/>
            <person name="Patel K."/>
            <person name="Murphy G."/>
            <person name="Piffanelli P."/>
            <person name="Wedler H."/>
            <person name="Wedler E."/>
            <person name="Wambutt R."/>
            <person name="Weitzenegger T."/>
            <person name="Pohl T."/>
            <person name="Terryn N."/>
            <person name="Gielen J."/>
            <person name="Villarroel R."/>
            <person name="De Clercq R."/>
            <person name="van Montagu M."/>
            <person name="Lecharny A."/>
            <person name="Aubourg S."/>
            <person name="Gy I."/>
            <person name="Kreis M."/>
            <person name="Lao N."/>
            <person name="Kavanagh T."/>
            <person name="Hempel S."/>
            <person name="Kotter P."/>
            <person name="Entian K.-D."/>
            <person name="Rieger M."/>
            <person name="Schaefer M."/>
            <person name="Funk B."/>
            <person name="Mueller-Auer S."/>
            <person name="Silvey M."/>
            <person name="James R."/>
            <person name="Monfort A."/>
            <person name="Pons A."/>
            <person name="Puigdomenech P."/>
            <person name="Douka A."/>
            <person name="Voukelatou E."/>
            <person name="Milioni D."/>
            <person name="Hatzopoulos P."/>
            <person name="Piravandi E."/>
            <person name="Obermaier B."/>
            <person name="Hilbert H."/>
            <person name="Duesterhoeft A."/>
            <person name="Moores T."/>
            <person name="Jones J.D.G."/>
            <person name="Eneva T."/>
            <person name="Palme K."/>
            <person name="Benes V."/>
            <person name="Rechmann S."/>
            <person name="Ansorge W."/>
            <person name="Cooke R."/>
            <person name="Berger C."/>
            <person name="Delseny M."/>
            <person name="Voet M."/>
            <person name="Volckaert G."/>
            <person name="Mewes H.-W."/>
            <person name="Klosterman S."/>
            <person name="Schueller C."/>
            <person name="Chalwatzis N."/>
        </authorList>
    </citation>
    <scope>NUCLEOTIDE SEQUENCE [LARGE SCALE GENOMIC DNA]</scope>
    <source>
        <strain>cv. Columbia</strain>
    </source>
</reference>
<reference key="2">
    <citation type="journal article" date="1999" name="Nature">
        <title>Sequence and analysis of chromosome 4 of the plant Arabidopsis thaliana.</title>
        <authorList>
            <person name="Mayer K.F.X."/>
            <person name="Schueller C."/>
            <person name="Wambutt R."/>
            <person name="Murphy G."/>
            <person name="Volckaert G."/>
            <person name="Pohl T."/>
            <person name="Duesterhoeft A."/>
            <person name="Stiekema W."/>
            <person name="Entian K.-D."/>
            <person name="Terryn N."/>
            <person name="Harris B."/>
            <person name="Ansorge W."/>
            <person name="Brandt P."/>
            <person name="Grivell L.A."/>
            <person name="Rieger M."/>
            <person name="Weichselgartner M."/>
            <person name="de Simone V."/>
            <person name="Obermaier B."/>
            <person name="Mache R."/>
            <person name="Mueller M."/>
            <person name="Kreis M."/>
            <person name="Delseny M."/>
            <person name="Puigdomenech P."/>
            <person name="Watson M."/>
            <person name="Schmidtheini T."/>
            <person name="Reichert B."/>
            <person name="Portetelle D."/>
            <person name="Perez-Alonso M."/>
            <person name="Boutry M."/>
            <person name="Bancroft I."/>
            <person name="Vos P."/>
            <person name="Hoheisel J."/>
            <person name="Zimmermann W."/>
            <person name="Wedler H."/>
            <person name="Ridley P."/>
            <person name="Langham S.-A."/>
            <person name="McCullagh B."/>
            <person name="Bilham L."/>
            <person name="Robben J."/>
            <person name="van der Schueren J."/>
            <person name="Grymonprez B."/>
            <person name="Chuang Y.-J."/>
            <person name="Vandenbussche F."/>
            <person name="Braeken M."/>
            <person name="Weltjens I."/>
            <person name="Voet M."/>
            <person name="Bastiaens I."/>
            <person name="Aert R."/>
            <person name="Defoor E."/>
            <person name="Weitzenegger T."/>
            <person name="Bothe G."/>
            <person name="Ramsperger U."/>
            <person name="Hilbert H."/>
            <person name="Braun M."/>
            <person name="Holzer E."/>
            <person name="Brandt A."/>
            <person name="Peters S."/>
            <person name="van Staveren M."/>
            <person name="Dirkse W."/>
            <person name="Mooijman P."/>
            <person name="Klein Lankhorst R."/>
            <person name="Rose M."/>
            <person name="Hauf J."/>
            <person name="Koetter P."/>
            <person name="Berneiser S."/>
            <person name="Hempel S."/>
            <person name="Feldpausch M."/>
            <person name="Lamberth S."/>
            <person name="Van den Daele H."/>
            <person name="De Keyser A."/>
            <person name="Buysshaert C."/>
            <person name="Gielen J."/>
            <person name="Villarroel R."/>
            <person name="De Clercq R."/>
            <person name="van Montagu M."/>
            <person name="Rogers J."/>
            <person name="Cronin A."/>
            <person name="Quail M.A."/>
            <person name="Bray-Allen S."/>
            <person name="Clark L."/>
            <person name="Doggett J."/>
            <person name="Hall S."/>
            <person name="Kay M."/>
            <person name="Lennard N."/>
            <person name="McLay K."/>
            <person name="Mayes R."/>
            <person name="Pettett A."/>
            <person name="Rajandream M.A."/>
            <person name="Lyne M."/>
            <person name="Benes V."/>
            <person name="Rechmann S."/>
            <person name="Borkova D."/>
            <person name="Bloecker H."/>
            <person name="Scharfe M."/>
            <person name="Grimm M."/>
            <person name="Loehnert T.-H."/>
            <person name="Dose S."/>
            <person name="de Haan M."/>
            <person name="Maarse A.C."/>
            <person name="Schaefer M."/>
            <person name="Mueller-Auer S."/>
            <person name="Gabel C."/>
            <person name="Fuchs M."/>
            <person name="Fartmann B."/>
            <person name="Granderath K."/>
            <person name="Dauner D."/>
            <person name="Herzl A."/>
            <person name="Neumann S."/>
            <person name="Argiriou A."/>
            <person name="Vitale D."/>
            <person name="Liguori R."/>
            <person name="Piravandi E."/>
            <person name="Massenet O."/>
            <person name="Quigley F."/>
            <person name="Clabauld G."/>
            <person name="Muendlein A."/>
            <person name="Felber R."/>
            <person name="Schnabl S."/>
            <person name="Hiller R."/>
            <person name="Schmidt W."/>
            <person name="Lecharny A."/>
            <person name="Aubourg S."/>
            <person name="Chefdor F."/>
            <person name="Cooke R."/>
            <person name="Berger C."/>
            <person name="Monfort A."/>
            <person name="Casacuberta E."/>
            <person name="Gibbons T."/>
            <person name="Weber N."/>
            <person name="Vandenbol M."/>
            <person name="Bargues M."/>
            <person name="Terol J."/>
            <person name="Torres A."/>
            <person name="Perez-Perez A."/>
            <person name="Purnelle B."/>
            <person name="Bent E."/>
            <person name="Johnson S."/>
            <person name="Tacon D."/>
            <person name="Jesse T."/>
            <person name="Heijnen L."/>
            <person name="Schwarz S."/>
            <person name="Scholler P."/>
            <person name="Heber S."/>
            <person name="Francs P."/>
            <person name="Bielke C."/>
            <person name="Frishman D."/>
            <person name="Haase D."/>
            <person name="Lemcke K."/>
            <person name="Mewes H.-W."/>
            <person name="Stocker S."/>
            <person name="Zaccaria P."/>
            <person name="Bevan M."/>
            <person name="Wilson R.K."/>
            <person name="de la Bastide M."/>
            <person name="Habermann K."/>
            <person name="Parnell L."/>
            <person name="Dedhia N."/>
            <person name="Gnoj L."/>
            <person name="Schutz K."/>
            <person name="Huang E."/>
            <person name="Spiegel L."/>
            <person name="Sekhon M."/>
            <person name="Murray J."/>
            <person name="Sheet P."/>
            <person name="Cordes M."/>
            <person name="Abu-Threideh J."/>
            <person name="Stoneking T."/>
            <person name="Kalicki J."/>
            <person name="Graves T."/>
            <person name="Harmon G."/>
            <person name="Edwards J."/>
            <person name="Latreille P."/>
            <person name="Courtney L."/>
            <person name="Cloud J."/>
            <person name="Abbott A."/>
            <person name="Scott K."/>
            <person name="Johnson D."/>
            <person name="Minx P."/>
            <person name="Bentley D."/>
            <person name="Fulton B."/>
            <person name="Miller N."/>
            <person name="Greco T."/>
            <person name="Kemp K."/>
            <person name="Kramer J."/>
            <person name="Fulton L."/>
            <person name="Mardis E."/>
            <person name="Dante M."/>
            <person name="Pepin K."/>
            <person name="Hillier L.W."/>
            <person name="Nelson J."/>
            <person name="Spieth J."/>
            <person name="Ryan E."/>
            <person name="Andrews S."/>
            <person name="Geisel C."/>
            <person name="Layman D."/>
            <person name="Du H."/>
            <person name="Ali J."/>
            <person name="Berghoff A."/>
            <person name="Jones K."/>
            <person name="Drone K."/>
            <person name="Cotton M."/>
            <person name="Joshu C."/>
            <person name="Antonoiu B."/>
            <person name="Zidanic M."/>
            <person name="Strong C."/>
            <person name="Sun H."/>
            <person name="Lamar B."/>
            <person name="Yordan C."/>
            <person name="Ma P."/>
            <person name="Zhong J."/>
            <person name="Preston R."/>
            <person name="Vil D."/>
            <person name="Shekher M."/>
            <person name="Matero A."/>
            <person name="Shah R."/>
            <person name="Swaby I.K."/>
            <person name="O'Shaughnessy A."/>
            <person name="Rodriguez M."/>
            <person name="Hoffman J."/>
            <person name="Till S."/>
            <person name="Granat S."/>
            <person name="Shohdy N."/>
            <person name="Hasegawa A."/>
            <person name="Hameed A."/>
            <person name="Lodhi M."/>
            <person name="Johnson A."/>
            <person name="Chen E."/>
            <person name="Marra M.A."/>
            <person name="Martienssen R."/>
            <person name="McCombie W.R."/>
        </authorList>
    </citation>
    <scope>NUCLEOTIDE SEQUENCE [LARGE SCALE GENOMIC DNA]</scope>
    <source>
        <strain>cv. Columbia</strain>
    </source>
</reference>
<reference key="3">
    <citation type="journal article" date="2017" name="Plant J.">
        <title>Araport11: a complete reannotation of the Arabidopsis thaliana reference genome.</title>
        <authorList>
            <person name="Cheng C.Y."/>
            <person name="Krishnakumar V."/>
            <person name="Chan A.P."/>
            <person name="Thibaud-Nissen F."/>
            <person name="Schobel S."/>
            <person name="Town C.D."/>
        </authorList>
    </citation>
    <scope>GENOME REANNOTATION</scope>
    <scope>SEQUENCE REVISION</scope>
    <source>
        <strain>cv. Columbia</strain>
    </source>
</reference>
<reference key="4">
    <citation type="submission" date="2002-03" db="EMBL/GenBank/DDBJ databases">
        <title>Full-length cDNA from Arabidopsis thaliana.</title>
        <authorList>
            <person name="Brover V.V."/>
            <person name="Troukhan M.E."/>
            <person name="Alexandrov N.A."/>
            <person name="Lu Y.-P."/>
            <person name="Flavell R.B."/>
            <person name="Feldmann K.A."/>
        </authorList>
    </citation>
    <scope>NUCLEOTIDE SEQUENCE [LARGE SCALE MRNA]</scope>
</reference>
<reference key="5">
    <citation type="journal article" date="2002" name="Genome Biol.">
        <title>Evaluation and classification of RING-finger domains encoded by the Arabidopsis genome.</title>
        <authorList>
            <person name="Kosarev P."/>
            <person name="Mayer K.F.X."/>
            <person name="Hardtke C.S."/>
        </authorList>
    </citation>
    <scope>GENE FAMILY ORGANIZATION</scope>
</reference>
<reference key="6">
    <citation type="journal article" date="2004" name="Genetics">
        <title>Isolation and gene expression analysis of Arabidopsis thaliana mutants with constitutive expression of ATL2, an early elicitor-response RING-H2 zinc-finger gene.</title>
        <authorList>
            <person name="Serrano M."/>
            <person name="Guzman P."/>
        </authorList>
    </citation>
    <scope>IDENTIFICATION</scope>
</reference>
<reference key="7">
    <citation type="journal article" date="2006" name="J. Mol. Evol.">
        <title>The ATL gene family from Arabidopsis thaliana and Oryza sativa comprises a large number of putative ubiquitin ligases of the RING-H2 type.</title>
        <authorList>
            <person name="Serrano M."/>
            <person name="Parra S."/>
            <person name="Alcaraz L.D."/>
            <person name="Guzman P."/>
        </authorList>
    </citation>
    <scope>NOMENCLATURE</scope>
    <scope>GENE FAMILY ORGANIZATION</scope>
</reference>
<reference key="8">
    <citation type="journal article" date="2007" name="Mol. Plant Microbe Interact.">
        <title>Identification of 118 Arabidopsis transcription factor and 30 ubiquitin-ligase genes responding to chitin, a plant-defense elicitor.</title>
        <authorList>
            <person name="Libault M."/>
            <person name="Wan J."/>
            <person name="Czechowski T."/>
            <person name="Udvardi M."/>
            <person name="Stacey G."/>
        </authorList>
    </citation>
    <scope>INDUCTION BY CHITIN</scope>
</reference>
<sequence>MLTTTILILLIVILMVSLHLYYRWYLLRSSPFNRTTAASTFFTDPSSTPGGLNPSIIKSLPIFTFSAVTALFAMECSVCLSEFKDNESGRVMPNCKHTFHVHCIDMWFHSHSSCPLCRSQIEPFAGGVKSSMDEVAISISDPVYGDTNHHEGTETTGDSVPEDSQRKPAAIEISQRNLGEIENDLSRSHSFRSPTDEPDDIFHSEFESRSGEVLLLLLLLSEFLIFCFRRSVACK</sequence>
<evidence type="ECO:0000250" key="1"/>
<evidence type="ECO:0000255" key="2"/>
<evidence type="ECO:0000255" key="3">
    <source>
        <dbReference type="PROSITE-ProRule" id="PRU00175"/>
    </source>
</evidence>
<evidence type="ECO:0000256" key="4">
    <source>
        <dbReference type="SAM" id="MobiDB-lite"/>
    </source>
</evidence>
<evidence type="ECO:0000269" key="5">
    <source>
    </source>
</evidence>
<evidence type="ECO:0000305" key="6"/>
<feature type="chain" id="PRO_0000055801" description="RING-H2 finger protein ATL17">
    <location>
        <begin position="1"/>
        <end position="235"/>
    </location>
</feature>
<feature type="transmembrane region" description="Helical" evidence="2">
    <location>
        <begin position="1"/>
        <end position="21"/>
    </location>
</feature>
<feature type="zinc finger region" description="RING-type; atypical" evidence="3">
    <location>
        <begin position="76"/>
        <end position="118"/>
    </location>
</feature>
<feature type="region of interest" description="Disordered" evidence="4">
    <location>
        <begin position="143"/>
        <end position="167"/>
    </location>
</feature>
<feature type="sequence conflict" description="In Ref. 4; AAM61585." evidence="6" ref="4">
    <original>LF</original>
    <variation>QN</variation>
    <location>
        <begin position="71"/>
        <end position="72"/>
    </location>
</feature>
<feature type="sequence conflict" description="In Ref. 4; AAM61585." evidence="6" ref="4">
    <original>E</original>
    <variation>K</variation>
    <location>
        <position position="75"/>
    </location>
</feature>
<feature type="sequence conflict" description="In Ref. 3; AEE83676 and 4; AAM61585." evidence="6" ref="3 4">
    <original>H</original>
    <variation>D</variation>
    <location>
        <position position="102"/>
    </location>
</feature>
<feature type="sequence conflict" description="In Ref. 3; AEE83676 and 4; AAM61585." evidence="6" ref="3 4">
    <original>Q</original>
    <variation>L</variation>
    <location>
        <position position="120"/>
    </location>
</feature>
<feature type="sequence conflict" description="In Ref. 3; AEE83676 and 4; AAM61585." evidence="6" ref="3 4">
    <original>S</original>
    <variation>T</variation>
    <location>
        <position position="131"/>
    </location>
</feature>
<feature type="sequence conflict" description="In Ref. 3; AEE83676 and 4; AAM61585." evidence="6" ref="3 4">
    <original>L</original>
    <variation>R</variation>
    <location>
        <position position="224"/>
    </location>
</feature>
<gene>
    <name type="primary">ATL17</name>
    <name type="ordered locus">At4g15975</name>
    <name type="ORF">dl4025w</name>
    <name type="ORF">FCAALL.90</name>
</gene>
<dbReference type="EC" id="2.3.2.27" evidence="6"/>
<dbReference type="EMBL" id="Z97340">
    <property type="protein sequence ID" value="CAB10376.1"/>
    <property type="status" value="ALT_SEQ"/>
    <property type="molecule type" value="Genomic_DNA"/>
</dbReference>
<dbReference type="EMBL" id="AL161542">
    <property type="protein sequence ID" value="CAB78639.1"/>
    <property type="status" value="ALT_SEQ"/>
    <property type="molecule type" value="Genomic_DNA"/>
</dbReference>
<dbReference type="EMBL" id="CP002687">
    <property type="protein sequence ID" value="AEE83676.1"/>
    <property type="molecule type" value="Genomic_DNA"/>
</dbReference>
<dbReference type="EMBL" id="AY085027">
    <property type="protein sequence ID" value="AAM61585.1"/>
    <property type="molecule type" value="mRNA"/>
</dbReference>
<dbReference type="PIR" id="F71425">
    <property type="entry name" value="F71425"/>
</dbReference>
<dbReference type="RefSeq" id="NP_567480.2">
    <property type="nucleotide sequence ID" value="NM_117690.3"/>
</dbReference>
<dbReference type="SMR" id="Q8LF65"/>
<dbReference type="STRING" id="3702.Q8LF65"/>
<dbReference type="GlyGen" id="Q8LF65">
    <property type="glycosylation" value="1 site"/>
</dbReference>
<dbReference type="PaxDb" id="3702-AT4G15975.1"/>
<dbReference type="PeptideAtlas" id="Q8LF65"/>
<dbReference type="GeneID" id="827281"/>
<dbReference type="KEGG" id="ath:AT4G15975"/>
<dbReference type="Araport" id="AT4G15975"/>
<dbReference type="TAIR" id="AT4G15975"/>
<dbReference type="eggNOG" id="KOG0800">
    <property type="taxonomic scope" value="Eukaryota"/>
</dbReference>
<dbReference type="HOGENOM" id="CLU_066543_0_0_1"/>
<dbReference type="InParanoid" id="Q8LF65"/>
<dbReference type="PhylomeDB" id="Q8LF65"/>
<dbReference type="UniPathway" id="UPA00143"/>
<dbReference type="PRO" id="PR:Q8LF65"/>
<dbReference type="Proteomes" id="UP000006548">
    <property type="component" value="Chromosome 4"/>
</dbReference>
<dbReference type="ExpressionAtlas" id="Q8LF65">
    <property type="expression patterns" value="baseline and differential"/>
</dbReference>
<dbReference type="GO" id="GO:0016020">
    <property type="term" value="C:membrane"/>
    <property type="evidence" value="ECO:0007669"/>
    <property type="project" value="UniProtKB-SubCell"/>
</dbReference>
<dbReference type="GO" id="GO:0016740">
    <property type="term" value="F:transferase activity"/>
    <property type="evidence" value="ECO:0007669"/>
    <property type="project" value="UniProtKB-KW"/>
</dbReference>
<dbReference type="GO" id="GO:0008270">
    <property type="term" value="F:zinc ion binding"/>
    <property type="evidence" value="ECO:0007669"/>
    <property type="project" value="UniProtKB-KW"/>
</dbReference>
<dbReference type="GO" id="GO:0006952">
    <property type="term" value="P:defense response"/>
    <property type="evidence" value="ECO:0007669"/>
    <property type="project" value="UniProtKB-KW"/>
</dbReference>
<dbReference type="GO" id="GO:0016567">
    <property type="term" value="P:protein ubiquitination"/>
    <property type="evidence" value="ECO:0007669"/>
    <property type="project" value="UniProtKB-UniPathway"/>
</dbReference>
<dbReference type="CDD" id="cd16461">
    <property type="entry name" value="RING-H2_EL5-like"/>
    <property type="match status" value="1"/>
</dbReference>
<dbReference type="FunFam" id="3.30.40.10:FF:000187">
    <property type="entry name" value="E3 ubiquitin-protein ligase ATL6"/>
    <property type="match status" value="1"/>
</dbReference>
<dbReference type="Gene3D" id="3.30.40.10">
    <property type="entry name" value="Zinc/RING finger domain, C3HC4 (zinc finger)"/>
    <property type="match status" value="1"/>
</dbReference>
<dbReference type="InterPro" id="IPR044600">
    <property type="entry name" value="ATL1/ATL16-like"/>
</dbReference>
<dbReference type="InterPro" id="IPR001841">
    <property type="entry name" value="Znf_RING"/>
</dbReference>
<dbReference type="InterPro" id="IPR013083">
    <property type="entry name" value="Znf_RING/FYVE/PHD"/>
</dbReference>
<dbReference type="PANTHER" id="PTHR46913">
    <property type="entry name" value="RING-H2 FINGER PROTEIN ATL16"/>
    <property type="match status" value="1"/>
</dbReference>
<dbReference type="PANTHER" id="PTHR46913:SF1">
    <property type="entry name" value="RING-H2 FINGER PROTEIN ATL16"/>
    <property type="match status" value="1"/>
</dbReference>
<dbReference type="Pfam" id="PF13639">
    <property type="entry name" value="zf-RING_2"/>
    <property type="match status" value="1"/>
</dbReference>
<dbReference type="SMART" id="SM00184">
    <property type="entry name" value="RING"/>
    <property type="match status" value="1"/>
</dbReference>
<dbReference type="SUPFAM" id="SSF57850">
    <property type="entry name" value="RING/U-box"/>
    <property type="match status" value="1"/>
</dbReference>
<dbReference type="PROSITE" id="PS50089">
    <property type="entry name" value="ZF_RING_2"/>
    <property type="match status" value="1"/>
</dbReference>
<proteinExistence type="evidence at transcript level"/>
<organism>
    <name type="scientific">Arabidopsis thaliana</name>
    <name type="common">Mouse-ear cress</name>
    <dbReference type="NCBI Taxonomy" id="3702"/>
    <lineage>
        <taxon>Eukaryota</taxon>
        <taxon>Viridiplantae</taxon>
        <taxon>Streptophyta</taxon>
        <taxon>Embryophyta</taxon>
        <taxon>Tracheophyta</taxon>
        <taxon>Spermatophyta</taxon>
        <taxon>Magnoliopsida</taxon>
        <taxon>eudicotyledons</taxon>
        <taxon>Gunneridae</taxon>
        <taxon>Pentapetalae</taxon>
        <taxon>rosids</taxon>
        <taxon>malvids</taxon>
        <taxon>Brassicales</taxon>
        <taxon>Brassicaceae</taxon>
        <taxon>Camelineae</taxon>
        <taxon>Arabidopsis</taxon>
    </lineage>
</organism>
<comment type="function">
    <text>May be involved in the early steps of the plant defense signaling pathway.</text>
</comment>
<comment type="catalytic activity">
    <reaction evidence="6">
        <text>S-ubiquitinyl-[E2 ubiquitin-conjugating enzyme]-L-cysteine + [acceptor protein]-L-lysine = [E2 ubiquitin-conjugating enzyme]-L-cysteine + N(6)-ubiquitinyl-[acceptor protein]-L-lysine.</text>
        <dbReference type="EC" id="2.3.2.27"/>
    </reaction>
</comment>
<comment type="pathway">
    <text>Protein modification; protein ubiquitination.</text>
</comment>
<comment type="subcellular location">
    <subcellularLocation>
        <location evidence="6">Membrane</location>
        <topology evidence="6">Single-pass membrane protein</topology>
    </subcellularLocation>
</comment>
<comment type="induction">
    <text evidence="5">Up-regulated by chitin.</text>
</comment>
<comment type="domain">
    <text evidence="1">The RING-type zinc finger domain mediates binding to an E2 ubiquitin-conjugating enzyme.</text>
</comment>
<comment type="similarity">
    <text evidence="6">Belongs to the RING-type zinc finger family. ATL subfamily.</text>
</comment>
<comment type="sequence caution" evidence="6">
    <conflict type="erroneous gene model prediction">
        <sequence resource="EMBL-CDS" id="CAB10376"/>
    </conflict>
    <text>The predicted gene At4g15970 has been split into 2 genes: At4g15970 and At4g15975.</text>
</comment>
<comment type="sequence caution" evidence="6">
    <conflict type="erroneous gene model prediction">
        <sequence resource="EMBL-CDS" id="CAB78639"/>
    </conflict>
    <text>The predicted gene At4g15970 has been split into 2 genes: At4g15970 and At4g15975.</text>
</comment>
<name>ATL17_ARATH</name>
<accession>Q8LF65</accession>
<accession>F4JKY8</accession>
<accession>O23446</accession>